<name>ASIC1_HUMAN</name>
<evidence type="ECO:0000250" key="1">
    <source>
        <dbReference type="UniProtKB" id="Q1XA76"/>
    </source>
</evidence>
<evidence type="ECO:0000250" key="2">
    <source>
        <dbReference type="UniProtKB" id="Q6NXK8"/>
    </source>
</evidence>
<evidence type="ECO:0000269" key="3">
    <source>
    </source>
</evidence>
<evidence type="ECO:0000269" key="4">
    <source>
    </source>
</evidence>
<evidence type="ECO:0000269" key="5">
    <source>
    </source>
</evidence>
<evidence type="ECO:0000269" key="6">
    <source>
    </source>
</evidence>
<evidence type="ECO:0000269" key="7">
    <source>
    </source>
</evidence>
<evidence type="ECO:0000269" key="8">
    <source>
    </source>
</evidence>
<evidence type="ECO:0000269" key="9">
    <source>
    </source>
</evidence>
<evidence type="ECO:0000269" key="10">
    <source>
    </source>
</evidence>
<evidence type="ECO:0000269" key="11">
    <source>
    </source>
</evidence>
<evidence type="ECO:0000269" key="12">
    <source>
    </source>
</evidence>
<evidence type="ECO:0000269" key="13">
    <source>
    </source>
</evidence>
<evidence type="ECO:0000269" key="14">
    <source>
    </source>
</evidence>
<evidence type="ECO:0000269" key="15">
    <source>
    </source>
</evidence>
<evidence type="ECO:0000303" key="16">
    <source>
    </source>
</evidence>
<evidence type="ECO:0000303" key="17">
    <source>
    </source>
</evidence>
<evidence type="ECO:0000303" key="18">
    <source>
    </source>
</evidence>
<evidence type="ECO:0000303" key="19">
    <source>
    </source>
</evidence>
<evidence type="ECO:0000303" key="20">
    <source ref="3"/>
</evidence>
<evidence type="ECO:0000305" key="21"/>
<evidence type="ECO:0000305" key="22">
    <source>
    </source>
</evidence>
<evidence type="ECO:0000312" key="23">
    <source>
        <dbReference type="HGNC" id="HGNC:100"/>
    </source>
</evidence>
<evidence type="ECO:0007744" key="24">
    <source>
        <dbReference type="PDB" id="7CFS"/>
    </source>
</evidence>
<evidence type="ECO:0007744" key="25">
    <source>
        <dbReference type="PDB" id="7CFT"/>
    </source>
</evidence>
<evidence type="ECO:0007744" key="26">
    <source>
        <dbReference type="PDB" id="7RNN"/>
    </source>
</evidence>
<evidence type="ECO:0007829" key="27">
    <source>
        <dbReference type="PDB" id="6L6I"/>
    </source>
</evidence>
<evidence type="ECO:0007829" key="28">
    <source>
        <dbReference type="PDB" id="6L6N"/>
    </source>
</evidence>
<evidence type="ECO:0007829" key="29">
    <source>
        <dbReference type="PDB" id="7RNN"/>
    </source>
</evidence>
<accession>P78348</accession>
<accession>A3KN86</accession>
<accession>E5KBL7</accession>
<accession>P78349</accession>
<accession>Q96CV2</accession>
<sequence length="528" mass="59909">MELKAEEEEVGGVQPVSIQAFASSSTLHGLAHIFSYERLSLKRALWALCFLGSLAVLLCVCTERVQYYFHYHHVTKLDEVAASQLTFPAVTLCNLNEFRFSQVSKNDLYHAGELLALLNNRYEIPDTQMADEKQLEILQDKANFRSFKPKPFNMREFYDRAGHDIRDMLLSCHFRGEVCSAEDFKVVFTRYGKCYTFNSGRDGRPRLKTMKGGTGNGLEIMLDIQQDEYLPVWGETDETSFEAGIKVQIHSQDEPPFIDQLGFGVAPGFQTFVACQEQRLIYLPPPWGTCKAVTMDSDLDFFDSYSITACRIDCETRYLVENCNCRMVHMPGDAPYCTPEQYKECADPALDFLVEKDQEYCVCEMPCNLTRYGKELSMVKIPSKASAKYLAKKFNKSEQYIGENILVLDIFFEVLNYETIEQKKAYEIAGLLGDIGGQMGLFIGASILTVLELFDYAYEVIKHKLCRRGKCQKEAKRSSADKGVALSLDDVKRHNPCESLRGHPAGMTYAANILPHHPARGTFEDFTC</sequence>
<reference key="1">
    <citation type="journal article" date="1997" name="Proc. Natl. Acad. Sci. U.S.A.">
        <title>BNaC1 and BNaC2 constitute a new family of human neuronal sodium channels related to degenerins and epithelial sodium channels.</title>
        <authorList>
            <person name="Garcia-Anoveros J."/>
            <person name="Derfler B.H."/>
            <person name="Neville-Golden J."/>
            <person name="Hyman B.T."/>
            <person name="Corey D.P."/>
        </authorList>
    </citation>
    <scope>NUCLEOTIDE SEQUENCE [MRNA] (ISOFORMS 1 AND ASIC1A)</scope>
    <scope>TISSUE SPECIFICITY</scope>
    <source>
        <tissue>Brain</tissue>
    </source>
</reference>
<reference key="2">
    <citation type="journal article" date="2010" name="J. Biol. Chem.">
        <title>Identification of a calcium permeable human acid-sensing ion channel 1 transcript variant.</title>
        <authorList>
            <person name="Hoagland E.N."/>
            <person name="Sherwood T.W."/>
            <person name="Lee K.G."/>
            <person name="Walker C.J."/>
            <person name="Askwith C.C."/>
        </authorList>
    </citation>
    <scope>NUCLEOTIDE SEQUENCE [MRNA] (ISOFORM ASIC1B)</scope>
    <scope>FUNCTION (ISOFORMS 1; ASIC1A AND ASIC1B)</scope>
    <scope>TRANSPORTER ACTIVITY</scope>
    <scope>ACTIVITY REGULATION</scope>
    <scope>SUBCELLULAR LOCATION</scope>
    <source>
        <tissue>Spinal ganglion</tissue>
    </source>
</reference>
<reference key="3">
    <citation type="submission" date="2007-08" db="EMBL/GenBank/DDBJ databases">
        <title>Acid sensing ion channels in human taste tissue.</title>
        <authorList>
            <person name="Huque T."/>
            <person name="Cao J."/>
            <person name="Lischka F.W."/>
            <person name="Spielman A.I."/>
            <person name="Feldman R.S."/>
            <person name="Cowart B.J."/>
            <person name="Wise P.M."/>
            <person name="Pribitkin E.A."/>
            <person name="Mackler S.A."/>
            <person name="Brand J.G."/>
        </authorList>
    </citation>
    <scope>NUCLEOTIDE SEQUENCE [MRNA] (ISOFORM 1)</scope>
</reference>
<reference key="4">
    <citation type="journal article" date="2006" name="Nature">
        <title>The finished DNA sequence of human chromosome 12.</title>
        <authorList>
            <person name="Scherer S.E."/>
            <person name="Muzny D.M."/>
            <person name="Buhay C.J."/>
            <person name="Chen R."/>
            <person name="Cree A."/>
            <person name="Ding Y."/>
            <person name="Dugan-Rocha S."/>
            <person name="Gill R."/>
            <person name="Gunaratne P."/>
            <person name="Harris R.A."/>
            <person name="Hawes A.C."/>
            <person name="Hernandez J."/>
            <person name="Hodgson A.V."/>
            <person name="Hume J."/>
            <person name="Jackson A."/>
            <person name="Khan Z.M."/>
            <person name="Kovar-Smith C."/>
            <person name="Lewis L.R."/>
            <person name="Lozado R.J."/>
            <person name="Metzker M.L."/>
            <person name="Milosavljevic A."/>
            <person name="Miner G.R."/>
            <person name="Montgomery K.T."/>
            <person name="Morgan M.B."/>
            <person name="Nazareth L.V."/>
            <person name="Scott G."/>
            <person name="Sodergren E."/>
            <person name="Song X.-Z."/>
            <person name="Steffen D."/>
            <person name="Lovering R.C."/>
            <person name="Wheeler D.A."/>
            <person name="Worley K.C."/>
            <person name="Yuan Y."/>
            <person name="Zhang Z."/>
            <person name="Adams C.Q."/>
            <person name="Ansari-Lari M.A."/>
            <person name="Ayele M."/>
            <person name="Brown M.J."/>
            <person name="Chen G."/>
            <person name="Chen Z."/>
            <person name="Clerc-Blankenburg K.P."/>
            <person name="Davis C."/>
            <person name="Delgado O."/>
            <person name="Dinh H.H."/>
            <person name="Draper H."/>
            <person name="Gonzalez-Garay M.L."/>
            <person name="Havlak P."/>
            <person name="Jackson L.R."/>
            <person name="Jacob L.S."/>
            <person name="Kelly S.H."/>
            <person name="Li L."/>
            <person name="Li Z."/>
            <person name="Liu J."/>
            <person name="Liu W."/>
            <person name="Lu J."/>
            <person name="Maheshwari M."/>
            <person name="Nguyen B.-V."/>
            <person name="Okwuonu G.O."/>
            <person name="Pasternak S."/>
            <person name="Perez L.M."/>
            <person name="Plopper F.J.H."/>
            <person name="Santibanez J."/>
            <person name="Shen H."/>
            <person name="Tabor P.E."/>
            <person name="Verduzco D."/>
            <person name="Waldron L."/>
            <person name="Wang Q."/>
            <person name="Williams G.A."/>
            <person name="Zhang J."/>
            <person name="Zhou J."/>
            <person name="Allen C.C."/>
            <person name="Amin A.G."/>
            <person name="Anyalebechi V."/>
            <person name="Bailey M."/>
            <person name="Barbaria J.A."/>
            <person name="Bimage K.E."/>
            <person name="Bryant N.P."/>
            <person name="Burch P.E."/>
            <person name="Burkett C.E."/>
            <person name="Burrell K.L."/>
            <person name="Calderon E."/>
            <person name="Cardenas V."/>
            <person name="Carter K."/>
            <person name="Casias K."/>
            <person name="Cavazos I."/>
            <person name="Cavazos S.R."/>
            <person name="Ceasar H."/>
            <person name="Chacko J."/>
            <person name="Chan S.N."/>
            <person name="Chavez D."/>
            <person name="Christopoulos C."/>
            <person name="Chu J."/>
            <person name="Cockrell R."/>
            <person name="Cox C.D."/>
            <person name="Dang M."/>
            <person name="Dathorne S.R."/>
            <person name="David R."/>
            <person name="Davis C.M."/>
            <person name="Davy-Carroll L."/>
            <person name="Deshazo D.R."/>
            <person name="Donlin J.E."/>
            <person name="D'Souza L."/>
            <person name="Eaves K.A."/>
            <person name="Egan A."/>
            <person name="Emery-Cohen A.J."/>
            <person name="Escotto M."/>
            <person name="Flagg N."/>
            <person name="Forbes L.D."/>
            <person name="Gabisi A.M."/>
            <person name="Garza M."/>
            <person name="Hamilton C."/>
            <person name="Henderson N."/>
            <person name="Hernandez O."/>
            <person name="Hines S."/>
            <person name="Hogues M.E."/>
            <person name="Huang M."/>
            <person name="Idlebird D.G."/>
            <person name="Johnson R."/>
            <person name="Jolivet A."/>
            <person name="Jones S."/>
            <person name="Kagan R."/>
            <person name="King L.M."/>
            <person name="Leal B."/>
            <person name="Lebow H."/>
            <person name="Lee S."/>
            <person name="LeVan J.M."/>
            <person name="Lewis L.C."/>
            <person name="London P."/>
            <person name="Lorensuhewa L.M."/>
            <person name="Loulseged H."/>
            <person name="Lovett D.A."/>
            <person name="Lucier A."/>
            <person name="Lucier R.L."/>
            <person name="Ma J."/>
            <person name="Madu R.C."/>
            <person name="Mapua P."/>
            <person name="Martindale A.D."/>
            <person name="Martinez E."/>
            <person name="Massey E."/>
            <person name="Mawhiney S."/>
            <person name="Meador M.G."/>
            <person name="Mendez S."/>
            <person name="Mercado C."/>
            <person name="Mercado I.C."/>
            <person name="Merritt C.E."/>
            <person name="Miner Z.L."/>
            <person name="Minja E."/>
            <person name="Mitchell T."/>
            <person name="Mohabbat F."/>
            <person name="Mohabbat K."/>
            <person name="Montgomery B."/>
            <person name="Moore N."/>
            <person name="Morris S."/>
            <person name="Munidasa M."/>
            <person name="Ngo R.N."/>
            <person name="Nguyen N.B."/>
            <person name="Nickerson E."/>
            <person name="Nwaokelemeh O.O."/>
            <person name="Nwokenkwo S."/>
            <person name="Obregon M."/>
            <person name="Oguh M."/>
            <person name="Oragunye N."/>
            <person name="Oviedo R.J."/>
            <person name="Parish B.J."/>
            <person name="Parker D.N."/>
            <person name="Parrish J."/>
            <person name="Parks K.L."/>
            <person name="Paul H.A."/>
            <person name="Payton B.A."/>
            <person name="Perez A."/>
            <person name="Perrin W."/>
            <person name="Pickens A."/>
            <person name="Primus E.L."/>
            <person name="Pu L.-L."/>
            <person name="Puazo M."/>
            <person name="Quiles M.M."/>
            <person name="Quiroz J.B."/>
            <person name="Rabata D."/>
            <person name="Reeves K."/>
            <person name="Ruiz S.J."/>
            <person name="Shao H."/>
            <person name="Sisson I."/>
            <person name="Sonaike T."/>
            <person name="Sorelle R.P."/>
            <person name="Sutton A.E."/>
            <person name="Svatek A.F."/>
            <person name="Svetz L.A."/>
            <person name="Tamerisa K.S."/>
            <person name="Taylor T.R."/>
            <person name="Teague B."/>
            <person name="Thomas N."/>
            <person name="Thorn R.D."/>
            <person name="Trejos Z.Y."/>
            <person name="Trevino B.K."/>
            <person name="Ukegbu O.N."/>
            <person name="Urban J.B."/>
            <person name="Vasquez L.I."/>
            <person name="Vera V.A."/>
            <person name="Villasana D.M."/>
            <person name="Wang L."/>
            <person name="Ward-Moore S."/>
            <person name="Warren J.T."/>
            <person name="Wei X."/>
            <person name="White F."/>
            <person name="Williamson A.L."/>
            <person name="Wleczyk R."/>
            <person name="Wooden H.S."/>
            <person name="Wooden S.H."/>
            <person name="Yen J."/>
            <person name="Yoon L."/>
            <person name="Yoon V."/>
            <person name="Zorrilla S.E."/>
            <person name="Nelson D."/>
            <person name="Kucherlapati R."/>
            <person name="Weinstock G."/>
            <person name="Gibbs R.A."/>
        </authorList>
    </citation>
    <scope>NUCLEOTIDE SEQUENCE [LARGE SCALE GENOMIC DNA]</scope>
</reference>
<reference key="5">
    <citation type="submission" date="2005-07" db="EMBL/GenBank/DDBJ databases">
        <authorList>
            <person name="Mural R.J."/>
            <person name="Istrail S."/>
            <person name="Sutton G.G."/>
            <person name="Florea L."/>
            <person name="Halpern A.L."/>
            <person name="Mobarry C.M."/>
            <person name="Lippert R."/>
            <person name="Walenz B."/>
            <person name="Shatkay H."/>
            <person name="Dew I."/>
            <person name="Miller J.R."/>
            <person name="Flanigan M.J."/>
            <person name="Edwards N.J."/>
            <person name="Bolanos R."/>
            <person name="Fasulo D."/>
            <person name="Halldorsson B.V."/>
            <person name="Hannenhalli S."/>
            <person name="Turner R."/>
            <person name="Yooseph S."/>
            <person name="Lu F."/>
            <person name="Nusskern D.R."/>
            <person name="Shue B.C."/>
            <person name="Zheng X.H."/>
            <person name="Zhong F."/>
            <person name="Delcher A.L."/>
            <person name="Huson D.H."/>
            <person name="Kravitz S.A."/>
            <person name="Mouchard L."/>
            <person name="Reinert K."/>
            <person name="Remington K.A."/>
            <person name="Clark A.G."/>
            <person name="Waterman M.S."/>
            <person name="Eichler E.E."/>
            <person name="Adams M.D."/>
            <person name="Hunkapiller M.W."/>
            <person name="Myers E.W."/>
            <person name="Venter J.C."/>
        </authorList>
    </citation>
    <scope>NUCLEOTIDE SEQUENCE [LARGE SCALE GENOMIC DNA]</scope>
</reference>
<reference key="6">
    <citation type="journal article" date="2004" name="Genome Res.">
        <title>The status, quality, and expansion of the NIH full-length cDNA project: the Mammalian Gene Collection (MGC).</title>
        <authorList>
            <consortium name="The MGC Project Team"/>
        </authorList>
    </citation>
    <scope>NUCLEOTIDE SEQUENCE [LARGE SCALE MRNA] OF 231-528 (ISOFORM 1)</scope>
    <source>
        <tissue>Ovary</tissue>
    </source>
</reference>
<reference key="7">
    <citation type="journal article" date="2000" name="Neuron">
        <title>Neuropeptide FF and FMRFamide potentiate acid-evoked currents from sensory neurons and proton-gated DEG/ENaC channels.</title>
        <authorList>
            <person name="Askwith C.C."/>
            <person name="Cheng C."/>
            <person name="Ikuma M."/>
            <person name="Benson C."/>
            <person name="Price M.P."/>
            <person name="Welsh M.J."/>
        </authorList>
    </citation>
    <scope>ACTIVITY REGULATION</scope>
</reference>
<reference key="8">
    <citation type="journal article" date="2002" name="Biochem. J.">
        <title>Interaction of the synaptic protein PICK1 (protein interacting with C kinase 1) with the non-voltage gated sodium channels BNC1 (brain Na+ channel 1) and ASIC (acid-sensing ion channel).</title>
        <authorList>
            <person name="Hruska-Hageman A.M."/>
            <person name="Wemmie J.A."/>
            <person name="Price M.P."/>
            <person name="Welsh M.J."/>
        </authorList>
    </citation>
    <scope>INTERACTION WITH PICK1</scope>
</reference>
<reference key="9">
    <citation type="journal article" date="2002" name="J. Biol. Chem.">
        <title>Protein kinase C isoform antagonism controls BNaC2 (ASIC1) function.</title>
        <authorList>
            <person name="Berdiev B.K."/>
            <person name="Xia J."/>
            <person name="Jovov B."/>
            <person name="Markert J.M."/>
            <person name="Mapstone T.B."/>
            <person name="Gillespie G.Y."/>
            <person name="Fuller C.M."/>
            <person name="Bubien J.K."/>
            <person name="Benos D.J."/>
        </authorList>
    </citation>
    <scope>PHOSPHORYLATION BY PKC</scope>
</reference>
<reference key="10">
    <citation type="journal article" date="2003" name="Proc. Natl. Acad. Sci. U.S.A.">
        <title>cAMP-dependent protein kinase phosphorylation of the acid-sensing ion channel-1 regulates its binding to the protein interacting with C-kinase-1.</title>
        <authorList>
            <person name="Leonard A.S."/>
            <person name="Yermolaieva O."/>
            <person name="Hruska-Hageman A."/>
            <person name="Askwith C.C."/>
            <person name="Price M.P."/>
            <person name="Wemmie J.A."/>
            <person name="Welsh M.J."/>
        </authorList>
    </citation>
    <scope>INTERACTION WITH PICK1</scope>
    <scope>SUBCELLULAR LOCATION</scope>
    <scope>PHOSPHORYLATION BY PKA</scope>
    <scope>MUTAGENESIS OF SER-478 AND SER-479</scope>
    <scope>PHOSPHORYLATION AT SER-479</scope>
</reference>
<reference key="11">
    <citation type="journal article" date="2004" name="J. Biol. Chem.">
        <title>Selective regulation of acid-sensing ion channel 1 by serine proteases.</title>
        <authorList>
            <person name="Poirot O."/>
            <person name="Vukicevic M."/>
            <person name="Boesch A."/>
            <person name="Kellenberger S."/>
        </authorList>
    </citation>
    <scope>REGULATION BY SERINE PROTEASES</scope>
</reference>
<reference key="12">
    <citation type="journal article" date="2009" name="J. Biol. Chem.">
        <title>Identification of protein domains that control proton and calcium sensitivity of ASIC1a.</title>
        <authorList>
            <person name="Sherwood T."/>
            <person name="Franke R."/>
            <person name="Conneely S."/>
            <person name="Joyner J."/>
            <person name="Arumugan P."/>
            <person name="Askwith C."/>
        </authorList>
    </citation>
    <scope>ACTIVITY REGULATION BY THE SPIDER VENOM PSALMOTOXIN-1</scope>
    <scope>SUBUNIT</scope>
    <scope>SITE</scope>
    <scope>MUTAGENESIS OF PHE-352 AND ASP-357</scope>
    <scope>SITES PHE-352 AND ASP-357</scope>
</reference>
<reference key="13">
    <citation type="journal article" date="2012" name="Nature">
        <title>Black mamba venom peptides target acid-sensing ion channels to abolish pain.</title>
        <authorList>
            <person name="Diochot S."/>
            <person name="Baron A."/>
            <person name="Salinas M."/>
            <person name="Douguet D."/>
            <person name="Scarzello S."/>
            <person name="Dabert-Gay A.-S."/>
            <person name="Debayle D."/>
            <person name="Friend V."/>
            <person name="Alloui A."/>
            <person name="Lazdunski M."/>
            <person name="Lingueglia E."/>
        </authorList>
    </citation>
    <scope>ACTIVITY REGULATION BY SNAKE VENOM MAMBALGIN-1</scope>
</reference>
<reference key="14">
    <citation type="journal article" date="2012" name="Nat. Commun.">
        <title>Structure of the acid-sensing ion channel 1 in complex with the gating modifier Psalmotoxin 1.</title>
        <authorList>
            <person name="Dawson R.J."/>
            <person name="Benz J."/>
            <person name="Stohler P."/>
            <person name="Tetaz T."/>
            <person name="Joseph C."/>
            <person name="Huber S."/>
            <person name="Schmid G."/>
            <person name="Hugin D."/>
            <person name="Pflimlin P."/>
            <person name="Trube G."/>
            <person name="Rudolph M.G."/>
            <person name="Hennig M."/>
            <person name="Ruf A."/>
        </authorList>
    </citation>
    <scope>ACTIVITY REGULATION BY SPIDER VENOM PSALMOTOXIN-1</scope>
</reference>
<reference key="15">
    <citation type="journal article" date="2017" name="Neuropharmacology">
        <title>Discovery and molecular interaction studies of a highly stable, tarantula peptide modulator of acid-sensing ion channel 1.</title>
        <authorList>
            <person name="Er S.Y."/>
            <person name="Cristofori-Armstrong B."/>
            <person name="Escoubas P."/>
            <person name="Rash L.D."/>
        </authorList>
    </citation>
    <scope>ACTIVITY REGULATION BY PI-THERAPHOTOXIN-HM3A</scope>
</reference>
<reference evidence="24 25" key="16">
    <citation type="journal article" date="2020" name="Elife">
        <title>Structural insights into human acid-sensing ion channel 1a inhibition by snake toxin mambalgin1.</title>
        <authorList>
            <person name="Sun D."/>
            <person name="Liu S."/>
            <person name="Li S."/>
            <person name="Zhang M."/>
            <person name="Yang F."/>
            <person name="Wen M."/>
            <person name="Shi P."/>
            <person name="Wang T."/>
            <person name="Pan M."/>
            <person name="Chang S."/>
            <person name="Zhang X."/>
            <person name="Zhang L."/>
            <person name="Tian C."/>
            <person name="Liu L."/>
        </authorList>
    </citation>
    <scope>STRUCTURE BY ELECTRON MICROSCOPY (3.56 ANGSTROMS) OF 1-468 IN COMPLEX WITH SNAKE VENOM MAMBALGIN-1</scope>
    <scope>FUNCTION</scope>
    <scope>TRANSPORTER ACTIVITY</scope>
    <scope>ACTIVITY REGULATION BY SNAKE VENOM MAMBALGIN-1</scope>
    <scope>SUBUNIT</scope>
    <scope>SUBCELLULAR LOCATION</scope>
    <scope>GLYCOSYLATION AT ASN-368 AND ASN-395</scope>
    <scope>DISULFIDE BONDS</scope>
    <scope>TOPOLOGY</scope>
    <scope>MOTIF</scope>
    <scope>MUTAGENESIS OF GLN-102; ARG-155; ASP-167; ASP-347; ASP-351; PHE-352 AND TYR-360</scope>
</reference>
<reference evidence="26" key="17">
    <citation type="journal article" date="2021" name="Elife">
        <title>Structure and analysis of nanobody binding to the human ASIC1a ion channel.</title>
        <authorList>
            <person name="Wu Y."/>
            <person name="Chen Z."/>
            <person name="Sigworth F.J."/>
            <person name="Canessa C.M."/>
        </authorList>
    </citation>
    <scope>STRUCTURE BY ELECTRON MICROSCOPY (2.86 ANGSTROMS) OF 39-462 OF HOMOTRIMER IN CLOSED CONFORMATION</scope>
    <scope>FUNCTION</scope>
    <scope>TRANSPORTER ACTIVITY</scope>
    <scope>ACTIVITY REGULATION</scope>
    <scope>SUBUNIT</scope>
    <scope>DISULFIDE BONDS</scope>
    <scope>TOPOLOGY</scope>
</reference>
<feature type="chain" id="PRO_0000181294" description="Acid-sensing ion channel 1">
    <location>
        <begin position="1"/>
        <end position="528"/>
    </location>
</feature>
<feature type="topological domain" description="Cytoplasmic" evidence="14 26">
    <location>
        <begin position="1"/>
        <end position="49"/>
    </location>
</feature>
<feature type="transmembrane region" description="Helical" evidence="22 26">
    <location>
        <begin position="50"/>
        <end position="66"/>
    </location>
</feature>
<feature type="topological domain" description="Extracellular" evidence="14 26">
    <location>
        <begin position="67"/>
        <end position="427"/>
    </location>
</feature>
<feature type="transmembrane region" description="Discontinuously helical" evidence="22 26">
    <location>
        <begin position="428"/>
        <end position="458"/>
    </location>
</feature>
<feature type="topological domain" description="Cytoplasmic" evidence="14 26">
    <location>
        <begin position="459"/>
        <end position="528"/>
    </location>
</feature>
<feature type="short sequence motif" description="GAS motif; ion selectivity filter" evidence="22 26">
    <location>
        <begin position="444"/>
        <end position="446"/>
    </location>
</feature>
<feature type="site" description="Involved in channel desensitization; the process by which the channel becomes unresponsive to proton stimulation" evidence="1">
    <location>
        <position position="79"/>
    </location>
</feature>
<feature type="site" description="Involved in the inhibition by the spider venom psalmotoxin-1" evidence="8">
    <location>
        <position position="352"/>
    </location>
</feature>
<feature type="site" description="Involved in proton-dependent gating" evidence="8">
    <location>
        <position position="357"/>
    </location>
</feature>
<feature type="modified residue" description="Phosphoserine; by PKA" evidence="6">
    <location>
        <position position="479"/>
    </location>
</feature>
<feature type="modified residue" description="Phosphoserine" evidence="2">
    <location>
        <position position="499"/>
    </location>
</feature>
<feature type="glycosylation site" description="N-linked (GlcNAc...) asparagine" evidence="13 14 24 25 26">
    <location>
        <position position="368"/>
    </location>
</feature>
<feature type="glycosylation site" description="N-linked (GlcNAc...) asparagine" evidence="13 14 24 25 26">
    <location>
        <position position="395"/>
    </location>
</feature>
<feature type="disulfide bond" evidence="13 14 24 25 26">
    <location>
        <begin position="93"/>
        <end position="194"/>
    </location>
</feature>
<feature type="disulfide bond" evidence="13 14 24 25 26">
    <location>
        <begin position="172"/>
        <end position="179"/>
    </location>
</feature>
<feature type="disulfide bond" evidence="13 14 24 25 26">
    <location>
        <begin position="290"/>
        <end position="367"/>
    </location>
</feature>
<feature type="disulfide bond" evidence="13 14 24 25 26">
    <location>
        <begin position="310"/>
        <end position="363"/>
    </location>
</feature>
<feature type="disulfide bond" evidence="13 14 24 25 26">
    <location>
        <begin position="314"/>
        <end position="361"/>
    </location>
</feature>
<feature type="disulfide bond" evidence="13 14 24 25 26">
    <location>
        <begin position="323"/>
        <end position="345"/>
    </location>
</feature>
<feature type="disulfide bond" evidence="13 14 24 25 26">
    <location>
        <begin position="325"/>
        <end position="337"/>
    </location>
</feature>
<feature type="splice variant" id="VSP_045298" description="In isoform Asic1b." evidence="18">
    <original>MELKAEEEEVGGVQPVSIQAFASSSTLHGLAHIFSYERLSLKRALWALCFLGSLAVLLCVCTERVQYYFHYHHVTKLDEVAASQLTFPAVTLCNLNEFRFSQVSKNDLYHAGELLALLNNRYEIPDTQMADEKQLEILQDKANFRSFKPKPFNMREFYDRAGHDIRDMLLSCHFRGEVCSAEDFK</original>
    <variation>MPIQIFCSMSFSSGEEAPGPLGDIWGPHHHQQQQDISESEEEEEEKEKEAVRKEASEGHSPMDLVAFANSCTLHGTNHIFVEGGPGPRQVLWAVAFVLALGAFLCQVGDRVAYYLSYPHVTLLNEVATTELAFPAVTLCNTNAVRLSQLSYPDLLYLAPMLGLDESDDPGVPLAPPGPEAFSGEPFNLHRFYNRSCHRLEDMLLYCSYQGGPCGPHNFS</variation>
    <location>
        <begin position="1"/>
        <end position="185"/>
    </location>
</feature>
<feature type="splice variant" id="VSP_015596" description="In isoform 1." evidence="17 19 20">
    <original>G</original>
    <variation>GELLMTPVPFSCHGHGVAPYHPKAGCSLLSHEGPPPQRPFPKPCCLG</variation>
    <location>
        <position position="433"/>
    </location>
</feature>
<feature type="mutagenesis site" description="Decreased inhibition by mambalgin-1; when associated with E-167." evidence="13">
    <original>Q</original>
    <variation>R</variation>
    <location>
        <position position="102"/>
    </location>
</feature>
<feature type="mutagenesis site" description="Decreased inhibition by mambalgin-1." evidence="13">
    <original>R</original>
    <variation>L</variation>
    <variation>F</variation>
    <location>
        <position position="155"/>
    </location>
</feature>
<feature type="mutagenesis site" description="Decreased inhibition by mambalgin-1; when associated with R-102." evidence="13">
    <original>D</original>
    <variation>E</variation>
    <location>
        <position position="167"/>
    </location>
</feature>
<feature type="mutagenesis site" description="Loss of inhibition by mambalgin-1. Changed pH-gating as lower pH is required for activation." evidence="13">
    <original>D</original>
    <variation>A</variation>
    <location>
        <position position="347"/>
    </location>
</feature>
<feature type="mutagenesis site" description="Decreased inhibition by mambalgin-1. Changed pH-gating as lower pH is required for activation." evidence="13">
    <original>D</original>
    <variation>G</variation>
    <location>
        <position position="351"/>
    </location>
</feature>
<feature type="mutagenesis site" description="Complete loss in the shift of pH for both activation and desensitization by the spider venom psalmotoxin-1. Decreased inhibition by mambalgin-1." evidence="8 13">
    <original>F</original>
    <variation>L</variation>
    <location>
        <position position="352"/>
    </location>
</feature>
<feature type="mutagenesis site" description="Changed pH-gating as lower pH is required for activation." evidence="8">
    <original>D</original>
    <variation>A</variation>
    <variation>N</variation>
    <location>
        <position position="357"/>
    </location>
</feature>
<feature type="mutagenesis site" description="Loss of inhibition by mambalgin-1." evidence="13">
    <original>Y</original>
    <variation>A</variation>
    <location>
        <position position="360"/>
    </location>
</feature>
<feature type="mutagenesis site" description="No effect on phosphorylation." evidence="6">
    <original>S</original>
    <variation>A</variation>
    <location>
        <position position="478"/>
    </location>
</feature>
<feature type="mutagenesis site" description="Loss of phosphorylation." evidence="6">
    <original>S</original>
    <variation>A</variation>
    <location>
        <position position="479"/>
    </location>
</feature>
<feature type="sequence conflict" description="In Ref. 1; AAB48980/AAB48981." evidence="21" ref="1">
    <original>G</original>
    <variation>D</variation>
    <location>
        <position position="212"/>
    </location>
</feature>
<feature type="helix" evidence="27">
    <location>
        <begin position="25"/>
        <end position="34"/>
    </location>
</feature>
<feature type="helix" evidence="27">
    <location>
        <begin position="38"/>
        <end position="40"/>
    </location>
</feature>
<feature type="turn" evidence="28">
    <location>
        <begin position="46"/>
        <end position="50"/>
    </location>
</feature>
<feature type="helix" evidence="28">
    <location>
        <begin position="51"/>
        <end position="61"/>
    </location>
</feature>
<feature type="helix" evidence="28">
    <location>
        <begin position="63"/>
        <end position="70"/>
    </location>
</feature>
<feature type="strand" evidence="28">
    <location>
        <begin position="73"/>
        <end position="81"/>
    </location>
</feature>
<feature type="strand" evidence="28">
    <location>
        <begin position="89"/>
        <end position="95"/>
    </location>
</feature>
<feature type="helix" evidence="28">
    <location>
        <begin position="100"/>
        <end position="102"/>
    </location>
</feature>
<feature type="helix" evidence="28">
    <location>
        <begin position="105"/>
        <end position="111"/>
    </location>
</feature>
<feature type="turn" evidence="28">
    <location>
        <begin position="112"/>
        <end position="116"/>
    </location>
</feature>
<feature type="helix" evidence="28">
    <location>
        <begin position="132"/>
        <end position="141"/>
    </location>
</feature>
<feature type="helix" evidence="28">
    <location>
        <begin position="154"/>
        <end position="161"/>
    </location>
</feature>
<feature type="helix" evidence="28">
    <location>
        <begin position="165"/>
        <end position="168"/>
    </location>
</feature>
<feature type="strand" evidence="28">
    <location>
        <begin position="169"/>
        <end position="174"/>
    </location>
</feature>
<feature type="helix" evidence="28">
    <location>
        <begin position="181"/>
        <end position="183"/>
    </location>
</feature>
<feature type="strand" evidence="28">
    <location>
        <begin position="184"/>
        <end position="189"/>
    </location>
</feature>
<feature type="strand" evidence="28">
    <location>
        <begin position="192"/>
        <end position="197"/>
    </location>
</feature>
<feature type="strand" evidence="27">
    <location>
        <begin position="208"/>
        <end position="211"/>
    </location>
</feature>
<feature type="helix" evidence="28">
    <location>
        <begin position="214"/>
        <end position="216"/>
    </location>
</feature>
<feature type="strand" evidence="28">
    <location>
        <begin position="217"/>
        <end position="223"/>
    </location>
</feature>
<feature type="helix" evidence="28">
    <location>
        <begin position="226"/>
        <end position="228"/>
    </location>
</feature>
<feature type="strand" evidence="28">
    <location>
        <begin position="243"/>
        <end position="250"/>
    </location>
</feature>
<feature type="strand" evidence="29">
    <location>
        <begin position="252"/>
        <end position="254"/>
    </location>
</feature>
<feature type="helix" evidence="28">
    <location>
        <begin position="258"/>
        <end position="261"/>
    </location>
</feature>
<feature type="strand" evidence="28">
    <location>
        <begin position="263"/>
        <end position="265"/>
    </location>
</feature>
<feature type="strand" evidence="28">
    <location>
        <begin position="269"/>
        <end position="281"/>
    </location>
</feature>
<feature type="turn" evidence="28">
    <location>
        <begin position="285"/>
        <end position="287"/>
    </location>
</feature>
<feature type="strand" evidence="28">
    <location>
        <begin position="302"/>
        <end position="304"/>
    </location>
</feature>
<feature type="helix" evidence="28">
    <location>
        <begin position="307"/>
        <end position="323"/>
    </location>
</feature>
<feature type="strand" evidence="28">
    <location>
        <begin position="332"/>
        <end position="334"/>
    </location>
</feature>
<feature type="helix" evidence="28">
    <location>
        <begin position="339"/>
        <end position="344"/>
    </location>
</feature>
<feature type="helix" evidence="28">
    <location>
        <begin position="346"/>
        <end position="355"/>
    </location>
</feature>
<feature type="helix" evidence="27">
    <location>
        <begin position="358"/>
        <end position="360"/>
    </location>
</feature>
<feature type="strand" evidence="28">
    <location>
        <begin position="366"/>
        <end position="382"/>
    </location>
</feature>
<feature type="helix" evidence="28">
    <location>
        <begin position="384"/>
        <end position="393"/>
    </location>
</feature>
<feature type="helix" evidence="28">
    <location>
        <begin position="398"/>
        <end position="404"/>
    </location>
</feature>
<feature type="strand" evidence="28">
    <location>
        <begin position="405"/>
        <end position="426"/>
    </location>
</feature>
<feature type="helix" evidence="28">
    <location>
        <begin position="429"/>
        <end position="448"/>
    </location>
</feature>
<comment type="function">
    <text evidence="2 9 13 14">Forms voltage-independent, pH-gated trimeric sodium channels that act as postsynaptic excitatory receptors in the nervous system, playing a crucial role in regulating synaptic plasticity, learning, and memory (PubMed:21036899, PubMed:32915133, PubMed:34319232). Upon extracellular pH drop this channel elicits transient, fast activating, and completely desensitizing inward currents (PubMed:21036899). Displays high selectivity for sodium ions but can also permit the permeation of other cations (PubMed:21036899). Regulates more or less directly intracellular calcium concentration and CaMKII phosphorylation, and thereby the density of dendritic spines. Modulates neuronal activity in the circuits underlying innate fear (By similarity).</text>
</comment>
<comment type="function">
    <molecule>Isoform Asic1a</molecule>
    <text evidence="9">Has high selectivity for sodium ions, but can also be permeable to other cations including calcium, lithium and potassium.</text>
</comment>
<comment type="function">
    <molecule>Isoform Asic1b</molecule>
    <text evidence="9">Produces acid activated currents with a reduced amplitude and inactivates faster (PubMed:21036899). Has high selectivity for sodium ions but also supports a calcium-mediated current which is sustained and maintained as long as acidic conditions are present (PubMed:21036899). Also potentially permeable to lithium and potassium (PubMed:21036899).</text>
</comment>
<comment type="function">
    <molecule>Isoform 1</molecule>
    <text evidence="9">Has no measurable proton-gated sodium channel activity in vitro.</text>
</comment>
<comment type="catalytic activity">
    <reaction evidence="9 13 14">
        <text>Na(+)(in) = Na(+)(out)</text>
        <dbReference type="Rhea" id="RHEA:34963"/>
        <dbReference type="ChEBI" id="CHEBI:29101"/>
    </reaction>
</comment>
<comment type="catalytic activity">
    <reaction evidence="9">
        <text>K(+)(in) = K(+)(out)</text>
        <dbReference type="Rhea" id="RHEA:29463"/>
        <dbReference type="ChEBI" id="CHEBI:29103"/>
    </reaction>
</comment>
<comment type="catalytic activity">
    <reaction evidence="9">
        <text>Li(+)(in) = Li(+)(out)</text>
        <dbReference type="Rhea" id="RHEA:78551"/>
        <dbReference type="ChEBI" id="CHEBI:49713"/>
    </reaction>
</comment>
<comment type="catalytic activity">
    <reaction evidence="9">
        <text>Ca(2+)(in) = Ca(2+)(out)</text>
        <dbReference type="Rhea" id="RHEA:29671"/>
        <dbReference type="ChEBI" id="CHEBI:29108"/>
    </reaction>
</comment>
<comment type="activity regulation">
    <text evidence="3 8 9 10 11 12 13 14">Potentiated by FMRFamide-related neuropeptides, which are induced during inflammation and modulate pain responses (PubMed:10798398). Inhibited by the diuretic drug amiloride (PubMed:34319232). Spider venom psalmotoxin-1 inhibits the channel by locking it in its desensitized conformation (PubMed:19654327, PubMed:21036899, PubMed:22760635, PubMed:34319232). The homotrimeric channel is inhibited by the spider venom pi-theraphotoxin-Hm3a (PubMed:28327374). Homotrimeric and heterotrimeric (with ASIC2 isoform 1) channels are inhibited by the snake venom mambalgin-1, which prevents proton-induced transitions from the resting closed state to the active and/or desensitized states (PubMed:23034652, PubMed:32915133). Inhibited by Texas coral snake toxin MitTx1 (PubMed:34319232).</text>
</comment>
<comment type="subunit">
    <text evidence="2 4 6 8 13 14">Forms functional homotrimeric channels (PubMed:32915133, PubMed:34319232). Forms heterotrimers with other ASIC proteins, resulting in channels with distinct properties (PubMed:19654327). Interacts with PICK1; regulates ASIC1 clustering in membranes (PubMed:11802773, PubMed:12578970). Interacts with STOM; alters heterotrimeric channels activity (By similarity).</text>
</comment>
<comment type="interaction">
    <interactant intactId="EBI-79189">
        <id>P78348</id>
    </interactant>
    <interactant intactId="EBI-17272405">
        <id>Q8N743</id>
        <label>KIR3DL3</label>
    </interactant>
    <organismsDiffer>false</organismsDiffer>
    <experiments>3</experiments>
</comment>
<comment type="interaction">
    <interactant intactId="EBI-79189">
        <id>P78348</id>
    </interactant>
    <interactant intactId="EBI-11324706">
        <id>Q99735</id>
        <label>MGST2</label>
    </interactant>
    <organismsDiffer>false</organismsDiffer>
    <experiments>3</experiments>
</comment>
<comment type="interaction">
    <interactant intactId="EBI-79189">
        <id>P78348</id>
    </interactant>
    <interactant intactId="EBI-79165">
        <id>Q9NRD5</id>
        <label>PICK1</label>
    </interactant>
    <organismsDiffer>false</organismsDiffer>
    <experiments>4</experiments>
</comment>
<comment type="subcellular location">
    <subcellularLocation>
        <location evidence="6 9">Cell membrane</location>
        <topology evidence="13 14">Multi-pass membrane protein</topology>
    </subcellularLocation>
    <subcellularLocation>
        <location evidence="2">Postsynaptic cell membrane</location>
    </subcellularLocation>
    <subcellularLocation>
        <location evidence="2">Cell projection</location>
        <location evidence="2">Dendrite</location>
    </subcellularLocation>
    <text evidence="2">Isolated in synaptosomes from the dendritic synapses of neurons.</text>
</comment>
<comment type="alternative products">
    <event type="alternative splicing"/>
    <isoform>
        <id>P78348-2</id>
        <name>Asic1a</name>
        <name evidence="18">hvariant 2</name>
        <sequence type="displayed"/>
    </isoform>
    <isoform>
        <id>P78348-1</id>
        <name>1</name>
        <name evidence="18">hvariant 1</name>
        <sequence type="described" ref="VSP_015596"/>
    </isoform>
    <isoform>
        <id>P78348-3</id>
        <name>Asic1b</name>
        <name evidence="18">hvariant 3</name>
        <sequence type="described" ref="VSP_045298"/>
    </isoform>
</comment>
<comment type="tissue specificity">
    <text evidence="15">Expressed in neurons throughout the central and peripheral nervous system.</text>
</comment>
<comment type="domain">
    <text evidence="1">The second transmembrane domain (TM2) is a discontinuous alpha-helix disrupted by the GAS motif, which forms the selectivity filter by adopting an extended, belt-like conformation aligned approximately parallel to the membrane plane. This peptide belt encircles the waist of the channel and divides TM2 into two discontinuous helical segments. The distal helical segment of TM2 interacts with the cytoplasmic portion of the first transmembrane domain (TM1) from a neighboring subunit, contributing to the structural and functional integrity of the channel.</text>
</comment>
<comment type="PTM">
    <text evidence="7">pH-gating could be regulated by serine proteases.</text>
</comment>
<comment type="PTM">
    <text evidence="5 6">Phosphorylation by PKA regulates interaction with PICK1 and subcellular localization (PubMed:12578970). Phosphorylation by PKC may regulate the channel (PubMed:12244121).</text>
</comment>
<comment type="similarity">
    <text evidence="21">Belongs to the amiloride-sensitive sodium channel (TC 1.A.6) family. ASIC1 subfamily.</text>
</comment>
<organism>
    <name type="scientific">Homo sapiens</name>
    <name type="common">Human</name>
    <dbReference type="NCBI Taxonomy" id="9606"/>
    <lineage>
        <taxon>Eukaryota</taxon>
        <taxon>Metazoa</taxon>
        <taxon>Chordata</taxon>
        <taxon>Craniata</taxon>
        <taxon>Vertebrata</taxon>
        <taxon>Euteleostomi</taxon>
        <taxon>Mammalia</taxon>
        <taxon>Eutheria</taxon>
        <taxon>Euarchontoglires</taxon>
        <taxon>Primates</taxon>
        <taxon>Haplorrhini</taxon>
        <taxon>Catarrhini</taxon>
        <taxon>Hominidae</taxon>
        <taxon>Homo</taxon>
    </lineage>
</organism>
<keyword id="KW-0002">3D-structure</keyword>
<keyword id="KW-0025">Alternative splicing</keyword>
<keyword id="KW-0106">Calcium</keyword>
<keyword id="KW-0109">Calcium transport</keyword>
<keyword id="KW-1003">Cell membrane</keyword>
<keyword id="KW-0966">Cell projection</keyword>
<keyword id="KW-1015">Disulfide bond</keyword>
<keyword id="KW-0325">Glycoprotein</keyword>
<keyword id="KW-0407">Ion channel</keyword>
<keyword id="KW-0406">Ion transport</keyword>
<keyword id="KW-0472">Membrane</keyword>
<keyword id="KW-0597">Phosphoprotein</keyword>
<keyword id="KW-0628">Postsynaptic cell membrane</keyword>
<keyword id="KW-1267">Proteomics identification</keyword>
<keyword id="KW-1185">Reference proteome</keyword>
<keyword id="KW-0915">Sodium</keyword>
<keyword id="KW-0894">Sodium channel</keyword>
<keyword id="KW-0739">Sodium transport</keyword>
<keyword id="KW-0770">Synapse</keyword>
<keyword id="KW-0812">Transmembrane</keyword>
<keyword id="KW-1133">Transmembrane helix</keyword>
<keyword id="KW-0813">Transport</keyword>
<gene>
    <name evidence="23" type="primary">ASIC1</name>
    <name evidence="18 23" type="synonym">ACCN2</name>
    <name evidence="19" type="synonym">BNAC2</name>
</gene>
<dbReference type="EMBL" id="U78180">
    <property type="protein sequence ID" value="AAB48980.1"/>
    <property type="molecule type" value="mRNA"/>
</dbReference>
<dbReference type="EMBL" id="U78181">
    <property type="protein sequence ID" value="AAB48981.1"/>
    <property type="molecule type" value="mRNA"/>
</dbReference>
<dbReference type="EMBL" id="HM991481">
    <property type="protein sequence ID" value="ADP44689.1"/>
    <property type="molecule type" value="mRNA"/>
</dbReference>
<dbReference type="EMBL" id="EU078959">
    <property type="protein sequence ID" value="ABU48925.1"/>
    <property type="molecule type" value="mRNA"/>
</dbReference>
<dbReference type="EMBL" id="AC025154">
    <property type="status" value="NOT_ANNOTATED_CDS"/>
    <property type="molecule type" value="Genomic_DNA"/>
</dbReference>
<dbReference type="EMBL" id="CH471111">
    <property type="protein sequence ID" value="EAW58118.1"/>
    <property type="molecule type" value="Genomic_DNA"/>
</dbReference>
<dbReference type="EMBL" id="BC013891">
    <property type="protein sequence ID" value="AAH13891.2"/>
    <property type="molecule type" value="mRNA"/>
</dbReference>
<dbReference type="EMBL" id="BC133707">
    <property type="protein sequence ID" value="AAI33708.1"/>
    <property type="molecule type" value="mRNA"/>
</dbReference>
<dbReference type="CCDS" id="CCDS44876.1">
    <molecule id="P78348-2"/>
</dbReference>
<dbReference type="CCDS" id="CCDS58228.1">
    <molecule id="P78348-3"/>
</dbReference>
<dbReference type="CCDS" id="CCDS8796.1">
    <molecule id="P78348-1"/>
</dbReference>
<dbReference type="RefSeq" id="NP_001086.2">
    <molecule id="P78348-2"/>
    <property type="nucleotide sequence ID" value="NM_001095.3"/>
</dbReference>
<dbReference type="RefSeq" id="NP_001243759.1">
    <molecule id="P78348-3"/>
    <property type="nucleotide sequence ID" value="NM_001256830.2"/>
</dbReference>
<dbReference type="RefSeq" id="NP_001399686.1">
    <molecule id="P78348-2"/>
    <property type="nucleotide sequence ID" value="NM_001412757.1"/>
</dbReference>
<dbReference type="RefSeq" id="NP_064423.2">
    <molecule id="P78348-1"/>
    <property type="nucleotide sequence ID" value="NM_020039.3"/>
</dbReference>
<dbReference type="PDB" id="6L6I">
    <property type="method" value="X-ray"/>
    <property type="resolution" value="3.24 A"/>
    <property type="chains" value="A/B/C=25-464"/>
</dbReference>
<dbReference type="PDB" id="6L6N">
    <property type="method" value="X-ray"/>
    <property type="resolution" value="2.86 A"/>
    <property type="chains" value="A/B/C=25-464"/>
</dbReference>
<dbReference type="PDB" id="7CFS">
    <property type="method" value="EM"/>
    <property type="resolution" value="3.56 A"/>
    <property type="chains" value="A/B/C=1-468"/>
</dbReference>
<dbReference type="PDB" id="7CFT">
    <property type="method" value="EM"/>
    <property type="resolution" value="3.90 A"/>
    <property type="chains" value="A/B/C=1-468"/>
</dbReference>
<dbReference type="PDB" id="7RNN">
    <property type="method" value="EM"/>
    <property type="resolution" value="2.86 A"/>
    <property type="chains" value="D=1-528"/>
</dbReference>
<dbReference type="PDBsum" id="6L6I"/>
<dbReference type="PDBsum" id="6L6N"/>
<dbReference type="PDBsum" id="7CFS"/>
<dbReference type="PDBsum" id="7CFT"/>
<dbReference type="PDBsum" id="7RNN"/>
<dbReference type="EMDB" id="EMD-24580"/>
<dbReference type="EMDB" id="EMD-30346"/>
<dbReference type="EMDB" id="EMD-30347"/>
<dbReference type="SMR" id="P78348"/>
<dbReference type="BioGRID" id="106559">
    <property type="interactions" value="84"/>
</dbReference>
<dbReference type="FunCoup" id="P78348">
    <property type="interactions" value="1039"/>
</dbReference>
<dbReference type="IntAct" id="P78348">
    <property type="interactions" value="45"/>
</dbReference>
<dbReference type="STRING" id="9606.ENSP00000228468"/>
<dbReference type="BindingDB" id="P78348"/>
<dbReference type="ChEMBL" id="CHEMBL1628477"/>
<dbReference type="DrugBank" id="DB00594">
    <property type="generic name" value="Amiloride"/>
</dbReference>
<dbReference type="DrugBank" id="DB00586">
    <property type="generic name" value="Diclofenac"/>
</dbReference>
<dbReference type="DrugCentral" id="P78348"/>
<dbReference type="GuidetoPHARMACOLOGY" id="684"/>
<dbReference type="GlyCosmos" id="P78348">
    <property type="glycosylation" value="2 sites, No reported glycans"/>
</dbReference>
<dbReference type="GlyGen" id="P78348">
    <property type="glycosylation" value="2 sites, 1 N-linked glycan (1 site)"/>
</dbReference>
<dbReference type="iPTMnet" id="P78348"/>
<dbReference type="PhosphoSitePlus" id="P78348"/>
<dbReference type="SwissPalm" id="P78348"/>
<dbReference type="BioMuta" id="ASIC1"/>
<dbReference type="DMDM" id="296439456"/>
<dbReference type="jPOST" id="P78348"/>
<dbReference type="MassIVE" id="P78348"/>
<dbReference type="PaxDb" id="9606-ENSP00000228468"/>
<dbReference type="PeptideAtlas" id="P78348"/>
<dbReference type="ProteomicsDB" id="15296"/>
<dbReference type="ProteomicsDB" id="57582">
    <molecule id="P78348-2"/>
</dbReference>
<dbReference type="ProteomicsDB" id="57583">
    <molecule id="P78348-1"/>
</dbReference>
<dbReference type="Pumba" id="P78348"/>
<dbReference type="Antibodypedia" id="26132">
    <property type="antibodies" value="376 antibodies from 37 providers"/>
</dbReference>
<dbReference type="DNASU" id="41"/>
<dbReference type="Ensembl" id="ENST00000228468.8">
    <molecule id="P78348-1"/>
    <property type="protein sequence ID" value="ENSP00000228468.4"/>
    <property type="gene ID" value="ENSG00000110881.12"/>
</dbReference>
<dbReference type="Ensembl" id="ENST00000447966.7">
    <molecule id="P78348-2"/>
    <property type="protein sequence ID" value="ENSP00000400228.3"/>
    <property type="gene ID" value="ENSG00000110881.12"/>
</dbReference>
<dbReference type="Ensembl" id="ENST00000552438.5">
    <molecule id="P78348-3"/>
    <property type="protein sequence ID" value="ENSP00000450247.1"/>
    <property type="gene ID" value="ENSG00000110881.12"/>
</dbReference>
<dbReference type="GeneID" id="41"/>
<dbReference type="KEGG" id="hsa:41"/>
<dbReference type="MANE-Select" id="ENST00000447966.7">
    <property type="protein sequence ID" value="ENSP00000400228.3"/>
    <property type="RefSeq nucleotide sequence ID" value="NM_001095.4"/>
    <property type="RefSeq protein sequence ID" value="NP_001086.2"/>
</dbReference>
<dbReference type="UCSC" id="uc001rvv.5">
    <molecule id="P78348-2"/>
    <property type="organism name" value="human"/>
</dbReference>
<dbReference type="AGR" id="HGNC:100"/>
<dbReference type="CTD" id="41"/>
<dbReference type="DisGeNET" id="41"/>
<dbReference type="GeneCards" id="ASIC1"/>
<dbReference type="HGNC" id="HGNC:100">
    <property type="gene designation" value="ASIC1"/>
</dbReference>
<dbReference type="HPA" id="ENSG00000110881">
    <property type="expression patterns" value="Tissue enriched (brain)"/>
</dbReference>
<dbReference type="MIM" id="602866">
    <property type="type" value="gene"/>
</dbReference>
<dbReference type="neXtProt" id="NX_P78348"/>
<dbReference type="OpenTargets" id="ENSG00000110881"/>
<dbReference type="PharmGKB" id="PA24434"/>
<dbReference type="VEuPathDB" id="HostDB:ENSG00000110881"/>
<dbReference type="eggNOG" id="KOG4294">
    <property type="taxonomic scope" value="Eukaryota"/>
</dbReference>
<dbReference type="GeneTree" id="ENSGT00940000158414"/>
<dbReference type="HOGENOM" id="CLU_020415_1_2_1"/>
<dbReference type="InParanoid" id="P78348"/>
<dbReference type="OMA" id="EVAASHM"/>
<dbReference type="OrthoDB" id="6021021at2759"/>
<dbReference type="PAN-GO" id="P78348">
    <property type="GO annotations" value="3 GO annotations based on evolutionary models"/>
</dbReference>
<dbReference type="PhylomeDB" id="P78348"/>
<dbReference type="TreeFam" id="TF330663"/>
<dbReference type="PathwayCommons" id="P78348"/>
<dbReference type="Reactome" id="R-HSA-2672351">
    <property type="pathway name" value="Stimuli-sensing channels"/>
</dbReference>
<dbReference type="SignaLink" id="P78348"/>
<dbReference type="SIGNOR" id="P78348"/>
<dbReference type="BioGRID-ORCS" id="41">
    <property type="hits" value="36 hits in 1158 CRISPR screens"/>
</dbReference>
<dbReference type="ChiTaRS" id="ASIC1">
    <property type="organism name" value="human"/>
</dbReference>
<dbReference type="GeneWiki" id="ACCN2"/>
<dbReference type="GenomeRNAi" id="41"/>
<dbReference type="Pharos" id="P78348">
    <property type="development level" value="Tchem"/>
</dbReference>
<dbReference type="PRO" id="PR:P78348"/>
<dbReference type="Proteomes" id="UP000005640">
    <property type="component" value="Chromosome 12"/>
</dbReference>
<dbReference type="RNAct" id="P78348">
    <property type="molecule type" value="protein"/>
</dbReference>
<dbReference type="Bgee" id="ENSG00000110881">
    <property type="expression patterns" value="Expressed in right hemisphere of cerebellum and 140 other cell types or tissues"/>
</dbReference>
<dbReference type="ExpressionAtlas" id="P78348">
    <property type="expression patterns" value="baseline and differential"/>
</dbReference>
<dbReference type="GO" id="GO:0009986">
    <property type="term" value="C:cell surface"/>
    <property type="evidence" value="ECO:0007669"/>
    <property type="project" value="Ensembl"/>
</dbReference>
<dbReference type="GO" id="GO:0030425">
    <property type="term" value="C:dendrite"/>
    <property type="evidence" value="ECO:0007669"/>
    <property type="project" value="UniProtKB-SubCell"/>
</dbReference>
<dbReference type="GO" id="GO:0098978">
    <property type="term" value="C:glutamatergic synapse"/>
    <property type="evidence" value="ECO:0000314"/>
    <property type="project" value="SynGO"/>
</dbReference>
<dbReference type="GO" id="GO:0005794">
    <property type="term" value="C:Golgi apparatus"/>
    <property type="evidence" value="ECO:0000314"/>
    <property type="project" value="HPA"/>
</dbReference>
<dbReference type="GO" id="GO:0005886">
    <property type="term" value="C:plasma membrane"/>
    <property type="evidence" value="ECO:0000314"/>
    <property type="project" value="HPA"/>
</dbReference>
<dbReference type="GO" id="GO:0098839">
    <property type="term" value="C:postsynaptic density membrane"/>
    <property type="evidence" value="ECO:0000314"/>
    <property type="project" value="SynGO"/>
</dbReference>
<dbReference type="GO" id="GO:0098793">
    <property type="term" value="C:presynapse"/>
    <property type="evidence" value="ECO:0007669"/>
    <property type="project" value="GOC"/>
</dbReference>
<dbReference type="GO" id="GO:0015280">
    <property type="term" value="F:ligand-gated sodium channel activity"/>
    <property type="evidence" value="ECO:0000318"/>
    <property type="project" value="GO_Central"/>
</dbReference>
<dbReference type="GO" id="GO:0022839">
    <property type="term" value="F:monoatomic ion-gated channel activity"/>
    <property type="evidence" value="ECO:0007669"/>
    <property type="project" value="Ensembl"/>
</dbReference>
<dbReference type="GO" id="GO:0160128">
    <property type="term" value="F:pH-gated monoatomic ion channel activity"/>
    <property type="evidence" value="ECO:0000314"/>
    <property type="project" value="UniProtKB"/>
</dbReference>
<dbReference type="GO" id="GO:0008306">
    <property type="term" value="P:associative learning"/>
    <property type="evidence" value="ECO:0007669"/>
    <property type="project" value="Ensembl"/>
</dbReference>
<dbReference type="GO" id="GO:0001662">
    <property type="term" value="P:behavioral fear response"/>
    <property type="evidence" value="ECO:0007669"/>
    <property type="project" value="Ensembl"/>
</dbReference>
<dbReference type="GO" id="GO:0070588">
    <property type="term" value="P:calcium ion transmembrane transport"/>
    <property type="evidence" value="ECO:0007669"/>
    <property type="project" value="Ensembl"/>
</dbReference>
<dbReference type="GO" id="GO:0071467">
    <property type="term" value="P:cellular response to pH"/>
    <property type="evidence" value="ECO:0000314"/>
    <property type="project" value="UniProtKB"/>
</dbReference>
<dbReference type="GO" id="GO:0007613">
    <property type="term" value="P:memory"/>
    <property type="evidence" value="ECO:0007669"/>
    <property type="project" value="Ensembl"/>
</dbReference>
<dbReference type="GO" id="GO:0046929">
    <property type="term" value="P:negative regulation of neurotransmitter secretion"/>
    <property type="evidence" value="ECO:0007669"/>
    <property type="project" value="Ensembl"/>
</dbReference>
<dbReference type="GO" id="GO:0007269">
    <property type="term" value="P:neurotransmitter secretion"/>
    <property type="evidence" value="ECO:0007669"/>
    <property type="project" value="Ensembl"/>
</dbReference>
<dbReference type="GO" id="GO:0042391">
    <property type="term" value="P:regulation of membrane potential"/>
    <property type="evidence" value="ECO:0007669"/>
    <property type="project" value="Ensembl"/>
</dbReference>
<dbReference type="GO" id="GO:0150052">
    <property type="term" value="P:regulation of postsynapse assembly"/>
    <property type="evidence" value="ECO:0007669"/>
    <property type="project" value="Ensembl"/>
</dbReference>
<dbReference type="GO" id="GO:0010447">
    <property type="term" value="P:response to acidic pH"/>
    <property type="evidence" value="ECO:0007669"/>
    <property type="project" value="Ensembl"/>
</dbReference>
<dbReference type="GO" id="GO:0001975">
    <property type="term" value="P:response to amphetamine"/>
    <property type="evidence" value="ECO:0007669"/>
    <property type="project" value="Ensembl"/>
</dbReference>
<dbReference type="GO" id="GO:0050915">
    <property type="term" value="P:sensory perception of sour taste"/>
    <property type="evidence" value="ECO:0000315"/>
    <property type="project" value="UniProtKB"/>
</dbReference>
<dbReference type="GO" id="GO:0035725">
    <property type="term" value="P:sodium ion transmembrane transport"/>
    <property type="evidence" value="ECO:0000314"/>
    <property type="project" value="UniProtKB"/>
</dbReference>
<dbReference type="GO" id="GO:0006814">
    <property type="term" value="P:sodium ion transport"/>
    <property type="evidence" value="ECO:0000303"/>
    <property type="project" value="UniProtKB"/>
</dbReference>
<dbReference type="FunFam" id="1.10.287.820:FF:000001">
    <property type="entry name" value="acid-sensing ion channel 1 isoform X2"/>
    <property type="match status" value="1"/>
</dbReference>
<dbReference type="FunFam" id="1.10.3590.10:FF:000001">
    <property type="entry name" value="acid-sensing ion channel 1 isoform X2"/>
    <property type="match status" value="1"/>
</dbReference>
<dbReference type="FunFam" id="1.10.3590.10:FF:000002">
    <property type="entry name" value="acid-sensing ion channel 1 isoform X2"/>
    <property type="match status" value="1"/>
</dbReference>
<dbReference type="FunFam" id="1.10.287.770:FF:000001">
    <property type="entry name" value="Acid-sensing ion channel subunit 1"/>
    <property type="match status" value="1"/>
</dbReference>
<dbReference type="Gene3D" id="1.10.3590.10">
    <property type="entry name" value="acid-sensing ion channel 1 domain"/>
    <property type="match status" value="2"/>
</dbReference>
<dbReference type="Gene3D" id="1.10.287.820">
    <property type="entry name" value="Acid-sensing ion channel domain"/>
    <property type="match status" value="1"/>
</dbReference>
<dbReference type="Gene3D" id="1.10.287.770">
    <property type="entry name" value="YojJ-like"/>
    <property type="match status" value="2"/>
</dbReference>
<dbReference type="InterPro" id="IPR001873">
    <property type="entry name" value="ENaC"/>
</dbReference>
<dbReference type="InterPro" id="IPR004724">
    <property type="entry name" value="ENaC_chordates"/>
</dbReference>
<dbReference type="InterPro" id="IPR020903">
    <property type="entry name" value="ENaC_CS"/>
</dbReference>
<dbReference type="NCBIfam" id="TIGR00859">
    <property type="entry name" value="ENaC"/>
    <property type="match status" value="1"/>
</dbReference>
<dbReference type="PANTHER" id="PTHR11690:SF170">
    <property type="entry name" value="ACID-SENSING ION CHANNEL 1"/>
    <property type="match status" value="1"/>
</dbReference>
<dbReference type="PANTHER" id="PTHR11690">
    <property type="entry name" value="AMILORIDE-SENSITIVE SODIUM CHANNEL-RELATED"/>
    <property type="match status" value="1"/>
</dbReference>
<dbReference type="Pfam" id="PF00858">
    <property type="entry name" value="ASC"/>
    <property type="match status" value="1"/>
</dbReference>
<dbReference type="PRINTS" id="PR01078">
    <property type="entry name" value="AMINACHANNEL"/>
</dbReference>
<dbReference type="PROSITE" id="PS01206">
    <property type="entry name" value="ASC"/>
    <property type="match status" value="1"/>
</dbReference>
<proteinExistence type="evidence at protein level"/>
<protein>
    <recommendedName>
        <fullName evidence="16">Acid-sensing ion channel 1</fullName>
        <shortName evidence="16">ASIC1</shortName>
    </recommendedName>
    <alternativeName>
        <fullName evidence="18 23">Amiloride-sensitive cation channel 2, neuronal</fullName>
    </alternativeName>
    <alternativeName>
        <fullName evidence="19">Brain sodium channel 2</fullName>
    </alternativeName>
</protein>